<gene>
    <name type="primary">PCMP-H49</name>
    <name type="ordered locus">At5g46460</name>
    <name type="ORF">K11I1.5</name>
</gene>
<sequence>MWSRAIFQRFRFRAFSISHVIHGKCYRSFSVTVEFQNREVLICNHLLSRRIDEAREVFNQVPSPHVSLYTKMITGYTRSNRLVDALNLFDEMPVRDVVSWNSMISGCVECGDMNTAVKLFDEMPERSVVSWTAMVNGCFRSGKVDQAERLFYQMPVKDTAAWNSMVHGYLQFGKVDDALKLFKQMPGKNVISWTTMICGLDQNERSGEALDLFKNMLRCCIKSTSRPFTCVITACANAPAFHMGIQVHGLIIKLGFLYEEYVSASLITFYANCKRIGDSRKVFDEKVHEQVAVWTALLSGYSLNKKHEDALSIFSGMLRNSILPNQSTFASGLNSCSALGTLDWGKEMHGVAVKLGLETDAFVGNSLVVMYSDSGNVNDAVSVFIKIFKKSIVSWNSIIVGCAQHGRGKWAFVIFGQMIRLNKEPDEITFTGLLSACSHCGFLEKGRKLFYYMSSGINHIDRKIQHYTCMVDILGRCGKLKEAEELIERMVVKPNEMVWLALLSACRMHSDVDRGEKAAAAIFNLDSKSSAAYVLLSNIYASAGRWSNVSKLRVKMKKNGIMKKPGSSWVVIRGKKHEFFSGDQPHCSRIYEKLEFLREKLKELGYAPDYRSALHDVEDEQKEEMLWYHSERLAIAFGLINTVEGSAVTVMKNLRVCEDCHTVIKLISGVVGREIVLRDPIRFHHFKNGTCSCGDYW</sequence>
<protein>
    <recommendedName>
        <fullName>Pentatricopeptide repeat-containing protein At5g46460, mitochondrial</fullName>
    </recommendedName>
</protein>
<proteinExistence type="evidence at transcript level"/>
<comment type="subcellular location">
    <subcellularLocation>
        <location evidence="2">Mitochondrion</location>
    </subcellularLocation>
</comment>
<comment type="similarity">
    <text evidence="2">Belongs to the PPR family. PCMP-H subfamily.</text>
</comment>
<comment type="online information" name="Pentatricopeptide repeat proteins">
    <link uri="https://ppr.plantenergy.uwa.edu.au"/>
</comment>
<evidence type="ECO:0000255" key="1"/>
<evidence type="ECO:0000305" key="2"/>
<accession>Q9FHF9</accession>
<keyword id="KW-0496">Mitochondrion</keyword>
<keyword id="KW-1185">Reference proteome</keyword>
<keyword id="KW-0677">Repeat</keyword>
<keyword id="KW-0809">Transit peptide</keyword>
<feature type="transit peptide" description="Mitochondrion" evidence="1">
    <location>
        <begin position="1"/>
        <end position="36"/>
    </location>
</feature>
<feature type="chain" id="PRO_0000363556" description="Pentatricopeptide repeat-containing protein At5g46460, mitochondrial">
    <location>
        <begin position="37"/>
        <end position="697"/>
    </location>
</feature>
<feature type="repeat" description="PPR 1">
    <location>
        <begin position="39"/>
        <end position="64"/>
    </location>
</feature>
<feature type="repeat" description="PPR 2">
    <location>
        <begin position="65"/>
        <end position="95"/>
    </location>
</feature>
<feature type="repeat" description="PPR 3">
    <location>
        <begin position="96"/>
        <end position="130"/>
    </location>
</feature>
<feature type="repeat" description="PPR 4">
    <location>
        <begin position="131"/>
        <end position="157"/>
    </location>
</feature>
<feature type="repeat" description="PPR 5">
    <location>
        <begin position="158"/>
        <end position="192"/>
    </location>
</feature>
<feature type="repeat" description="PPR 6">
    <location>
        <begin position="193"/>
        <end position="223"/>
    </location>
</feature>
<feature type="repeat" description="PPR 7">
    <location>
        <begin position="224"/>
        <end position="258"/>
    </location>
</feature>
<feature type="repeat" description="PPR 8">
    <location>
        <begin position="259"/>
        <end position="289"/>
    </location>
</feature>
<feature type="repeat" description="PPR 9">
    <location>
        <begin position="290"/>
        <end position="324"/>
    </location>
</feature>
<feature type="repeat" description="PPR 10">
    <location>
        <begin position="325"/>
        <end position="359"/>
    </location>
</feature>
<feature type="repeat" description="PPR 11">
    <location>
        <begin position="360"/>
        <end position="390"/>
    </location>
</feature>
<feature type="repeat" description="PPR 12">
    <location>
        <begin position="391"/>
        <end position="425"/>
    </location>
</feature>
<feature type="repeat" description="PPR 13">
    <location>
        <begin position="426"/>
        <end position="456"/>
    </location>
</feature>
<feature type="repeat" description="PPR 14">
    <location>
        <begin position="463"/>
        <end position="497"/>
    </location>
</feature>
<feature type="region of interest" description="Type E motif">
    <location>
        <begin position="498"/>
        <end position="573"/>
    </location>
</feature>
<feature type="region of interest" description="Type E(+) motif">
    <location>
        <begin position="574"/>
        <end position="602"/>
    </location>
</feature>
<feature type="region of interest" description="Type DYW motif">
    <location>
        <begin position="603"/>
        <end position="697"/>
    </location>
</feature>
<dbReference type="EMBL" id="AB019223">
    <property type="protein sequence ID" value="BAB10814.1"/>
    <property type="molecule type" value="Genomic_DNA"/>
</dbReference>
<dbReference type="EMBL" id="CP002688">
    <property type="protein sequence ID" value="AED95388.1"/>
    <property type="molecule type" value="Genomic_DNA"/>
</dbReference>
<dbReference type="RefSeq" id="NP_199458.1">
    <property type="nucleotide sequence ID" value="NM_124016.2"/>
</dbReference>
<dbReference type="SMR" id="Q9FHF9"/>
<dbReference type="FunCoup" id="Q9FHF9">
    <property type="interactions" value="123"/>
</dbReference>
<dbReference type="STRING" id="3702.Q9FHF9"/>
<dbReference type="PaxDb" id="3702-AT5G46460.1"/>
<dbReference type="EnsemblPlants" id="AT5G46460.1">
    <property type="protein sequence ID" value="AT5G46460.1"/>
    <property type="gene ID" value="AT5G46460"/>
</dbReference>
<dbReference type="GeneID" id="834689"/>
<dbReference type="Gramene" id="AT5G46460.1">
    <property type="protein sequence ID" value="AT5G46460.1"/>
    <property type="gene ID" value="AT5G46460"/>
</dbReference>
<dbReference type="KEGG" id="ath:AT5G46460"/>
<dbReference type="Araport" id="AT5G46460"/>
<dbReference type="TAIR" id="AT5G46460"/>
<dbReference type="eggNOG" id="KOG4197">
    <property type="taxonomic scope" value="Eukaryota"/>
</dbReference>
<dbReference type="HOGENOM" id="CLU_002706_15_1_1"/>
<dbReference type="InParanoid" id="Q9FHF9"/>
<dbReference type="OMA" id="QHGCGMW"/>
<dbReference type="PhylomeDB" id="Q9FHF9"/>
<dbReference type="PRO" id="PR:Q9FHF9"/>
<dbReference type="Proteomes" id="UP000006548">
    <property type="component" value="Chromosome 5"/>
</dbReference>
<dbReference type="ExpressionAtlas" id="Q9FHF9">
    <property type="expression patterns" value="baseline and differential"/>
</dbReference>
<dbReference type="GO" id="GO:0005739">
    <property type="term" value="C:mitochondrion"/>
    <property type="evidence" value="ECO:0007669"/>
    <property type="project" value="UniProtKB-SubCell"/>
</dbReference>
<dbReference type="GO" id="GO:0003723">
    <property type="term" value="F:RNA binding"/>
    <property type="evidence" value="ECO:0007669"/>
    <property type="project" value="InterPro"/>
</dbReference>
<dbReference type="GO" id="GO:0008270">
    <property type="term" value="F:zinc ion binding"/>
    <property type="evidence" value="ECO:0007669"/>
    <property type="project" value="InterPro"/>
</dbReference>
<dbReference type="GO" id="GO:0009451">
    <property type="term" value="P:RNA modification"/>
    <property type="evidence" value="ECO:0007669"/>
    <property type="project" value="InterPro"/>
</dbReference>
<dbReference type="FunFam" id="1.25.40.10:FF:000351">
    <property type="entry name" value="Pentatricopeptide repeat-containing protein"/>
    <property type="match status" value="1"/>
</dbReference>
<dbReference type="FunFam" id="1.25.40.10:FF:001303">
    <property type="entry name" value="Pentatricopeptide repeat-containing protein At5g46460, mitochondrial"/>
    <property type="match status" value="1"/>
</dbReference>
<dbReference type="FunFam" id="1.25.40.10:FF:002112">
    <property type="entry name" value="Pentatricopeptide repeat-containing protein At5g46460, mitochondrial"/>
    <property type="match status" value="1"/>
</dbReference>
<dbReference type="FunFam" id="1.25.40.10:FF:001308">
    <property type="entry name" value="pentatricopeptide repeat-containing protein At5g46460, mitochondrial"/>
    <property type="match status" value="1"/>
</dbReference>
<dbReference type="Gene3D" id="1.25.40.10">
    <property type="entry name" value="Tetratricopeptide repeat domain"/>
    <property type="match status" value="4"/>
</dbReference>
<dbReference type="InterPro" id="IPR032867">
    <property type="entry name" value="DYW_dom"/>
</dbReference>
<dbReference type="InterPro" id="IPR046848">
    <property type="entry name" value="E_motif"/>
</dbReference>
<dbReference type="InterPro" id="IPR002885">
    <property type="entry name" value="Pentatricopeptide_rpt"/>
</dbReference>
<dbReference type="InterPro" id="IPR046960">
    <property type="entry name" value="PPR_At4g14850-like_plant"/>
</dbReference>
<dbReference type="InterPro" id="IPR011990">
    <property type="entry name" value="TPR-like_helical_dom_sf"/>
</dbReference>
<dbReference type="NCBIfam" id="TIGR00756">
    <property type="entry name" value="PPR"/>
    <property type="match status" value="7"/>
</dbReference>
<dbReference type="PANTHER" id="PTHR47926">
    <property type="entry name" value="PENTATRICOPEPTIDE REPEAT-CONTAINING PROTEIN"/>
    <property type="match status" value="1"/>
</dbReference>
<dbReference type="PANTHER" id="PTHR47926:SF395">
    <property type="entry name" value="TETRATRICOPEPTIDE-LIKE HELICAL DOMAIN, DYW DOMAIN PROTEIN-RELATED"/>
    <property type="match status" value="1"/>
</dbReference>
<dbReference type="Pfam" id="PF14432">
    <property type="entry name" value="DYW_deaminase"/>
    <property type="match status" value="1"/>
</dbReference>
<dbReference type="Pfam" id="PF20431">
    <property type="entry name" value="E_motif"/>
    <property type="match status" value="1"/>
</dbReference>
<dbReference type="Pfam" id="PF01535">
    <property type="entry name" value="PPR"/>
    <property type="match status" value="5"/>
</dbReference>
<dbReference type="Pfam" id="PF13041">
    <property type="entry name" value="PPR_2"/>
    <property type="match status" value="2"/>
</dbReference>
<dbReference type="PROSITE" id="PS51375">
    <property type="entry name" value="PPR"/>
    <property type="match status" value="14"/>
</dbReference>
<reference key="1">
    <citation type="journal article" date="2000" name="DNA Res.">
        <title>Structural analysis of Arabidopsis thaliana chromosome 5. X. Sequence features of the regions of 3,076,755 bp covered by sixty P1 and TAC clones.</title>
        <authorList>
            <person name="Sato S."/>
            <person name="Nakamura Y."/>
            <person name="Kaneko T."/>
            <person name="Katoh T."/>
            <person name="Asamizu E."/>
            <person name="Kotani H."/>
            <person name="Tabata S."/>
        </authorList>
    </citation>
    <scope>NUCLEOTIDE SEQUENCE [LARGE SCALE GENOMIC DNA]</scope>
    <source>
        <strain>cv. Columbia</strain>
    </source>
</reference>
<reference key="2">
    <citation type="journal article" date="2017" name="Plant J.">
        <title>Araport11: a complete reannotation of the Arabidopsis thaliana reference genome.</title>
        <authorList>
            <person name="Cheng C.Y."/>
            <person name="Krishnakumar V."/>
            <person name="Chan A.P."/>
            <person name="Thibaud-Nissen F."/>
            <person name="Schobel S."/>
            <person name="Town C.D."/>
        </authorList>
    </citation>
    <scope>GENOME REANNOTATION</scope>
    <source>
        <strain>cv. Columbia</strain>
    </source>
</reference>
<reference key="3">
    <citation type="journal article" date="2000" name="Plant Mol. Biol.">
        <title>In Arabidopsis thaliana, 1% of the genome codes for a novel protein family unique to plants.</title>
        <authorList>
            <person name="Aubourg S."/>
            <person name="Boudet N."/>
            <person name="Kreis M."/>
            <person name="Lecharny A."/>
        </authorList>
    </citation>
    <scope>GENE FAMILY</scope>
</reference>
<reference key="4">
    <citation type="journal article" date="2004" name="Plant Cell">
        <title>Genome-wide analysis of Arabidopsis pentatricopeptide repeat proteins reveals their essential role in organelle biogenesis.</title>
        <authorList>
            <person name="Lurin C."/>
            <person name="Andres C."/>
            <person name="Aubourg S."/>
            <person name="Bellaoui M."/>
            <person name="Bitton F."/>
            <person name="Bruyere C."/>
            <person name="Caboche M."/>
            <person name="Debast C."/>
            <person name="Gualberto J."/>
            <person name="Hoffmann B."/>
            <person name="Lecharny A."/>
            <person name="Le Ret M."/>
            <person name="Martin-Magniette M.-L."/>
            <person name="Mireau H."/>
            <person name="Peeters N."/>
            <person name="Renou J.-P."/>
            <person name="Szurek B."/>
            <person name="Taconnat L."/>
            <person name="Small I."/>
        </authorList>
    </citation>
    <scope>GENE FAMILY</scope>
</reference>
<organism>
    <name type="scientific">Arabidopsis thaliana</name>
    <name type="common">Mouse-ear cress</name>
    <dbReference type="NCBI Taxonomy" id="3702"/>
    <lineage>
        <taxon>Eukaryota</taxon>
        <taxon>Viridiplantae</taxon>
        <taxon>Streptophyta</taxon>
        <taxon>Embryophyta</taxon>
        <taxon>Tracheophyta</taxon>
        <taxon>Spermatophyta</taxon>
        <taxon>Magnoliopsida</taxon>
        <taxon>eudicotyledons</taxon>
        <taxon>Gunneridae</taxon>
        <taxon>Pentapetalae</taxon>
        <taxon>rosids</taxon>
        <taxon>malvids</taxon>
        <taxon>Brassicales</taxon>
        <taxon>Brassicaceae</taxon>
        <taxon>Camelineae</taxon>
        <taxon>Arabidopsis</taxon>
    </lineage>
</organism>
<name>PP419_ARATH</name>